<feature type="chain" id="PRO_1000134578" description="UDP-N-acetyl-D-mannosaminuronic acid transferase">
    <location>
        <begin position="1"/>
        <end position="246"/>
    </location>
</feature>
<name>WECG_ECOSM</name>
<proteinExistence type="inferred from homology"/>
<keyword id="KW-0328">Glycosyltransferase</keyword>
<keyword id="KW-0808">Transferase</keyword>
<dbReference type="EC" id="2.4.1.180" evidence="1"/>
<dbReference type="EMBL" id="CP000970">
    <property type="protein sequence ID" value="ACB19560.1"/>
    <property type="molecule type" value="Genomic_DNA"/>
</dbReference>
<dbReference type="RefSeq" id="WP_001064038.1">
    <property type="nucleotide sequence ID" value="NC_010498.1"/>
</dbReference>
<dbReference type="SMR" id="B1LLW8"/>
<dbReference type="CAZy" id="GT26">
    <property type="family name" value="Glycosyltransferase Family 26"/>
</dbReference>
<dbReference type="GeneID" id="93778149"/>
<dbReference type="KEGG" id="ecm:EcSMS35_4159"/>
<dbReference type="HOGENOM" id="CLU_063203_3_2_6"/>
<dbReference type="UniPathway" id="UPA00566"/>
<dbReference type="Proteomes" id="UP000007011">
    <property type="component" value="Chromosome"/>
</dbReference>
<dbReference type="GO" id="GO:0047241">
    <property type="term" value="F:lipopolysaccharide N-acetylmannosaminouronosyltransferase activity"/>
    <property type="evidence" value="ECO:0007669"/>
    <property type="project" value="UniProtKB-UniRule"/>
</dbReference>
<dbReference type="GO" id="GO:0009246">
    <property type="term" value="P:enterobacterial common antigen biosynthetic process"/>
    <property type="evidence" value="ECO:0007669"/>
    <property type="project" value="UniProtKB-UniRule"/>
</dbReference>
<dbReference type="CDD" id="cd06533">
    <property type="entry name" value="Glyco_transf_WecG_TagA"/>
    <property type="match status" value="1"/>
</dbReference>
<dbReference type="HAMAP" id="MF_01001">
    <property type="entry name" value="WecG_RffM"/>
    <property type="match status" value="1"/>
</dbReference>
<dbReference type="InterPro" id="IPR023085">
    <property type="entry name" value="UDP-ManNAcA_Trfase_WecG"/>
</dbReference>
<dbReference type="InterPro" id="IPR004629">
    <property type="entry name" value="WecG_TagA_CpsF"/>
</dbReference>
<dbReference type="NCBIfam" id="NF002980">
    <property type="entry name" value="PRK03692.1"/>
    <property type="match status" value="1"/>
</dbReference>
<dbReference type="NCBIfam" id="TIGR00696">
    <property type="entry name" value="wecG_tagA_cpsF"/>
    <property type="match status" value="1"/>
</dbReference>
<dbReference type="PANTHER" id="PTHR34136">
    <property type="match status" value="1"/>
</dbReference>
<dbReference type="PANTHER" id="PTHR34136:SF1">
    <property type="entry name" value="UDP-N-ACETYL-D-MANNOSAMINURONIC ACID TRANSFERASE"/>
    <property type="match status" value="1"/>
</dbReference>
<dbReference type="Pfam" id="PF03808">
    <property type="entry name" value="Glyco_tran_WecG"/>
    <property type="match status" value="1"/>
</dbReference>
<protein>
    <recommendedName>
        <fullName evidence="1">UDP-N-acetyl-D-mannosaminuronic acid transferase</fullName>
        <shortName evidence="1">UDP-ManNAcA transferase</shortName>
        <ecNumber evidence="1">2.4.1.180</ecNumber>
    </recommendedName>
</protein>
<comment type="function">
    <text evidence="1">Catalyzes the synthesis of Und-PP-GlcNAc-ManNAcA (Lipid II), the second lipid-linked intermediate involved in enterobacterial common antigen (ECA) synthesis.</text>
</comment>
<comment type="catalytic activity">
    <reaction evidence="1">
        <text>UDP-N-acetyl-alpha-D-mannosaminouronate + N-acetyl-alpha-D-glucosaminyl-di-trans,octa-cis-undecaprenyl diphosphate = beta-D-ManNAcA-(1-&gt;4)-alpha-D-GlcNAc-di-trans,octa-cis-undecaprenyl diphosphate + UDP + H(+)</text>
        <dbReference type="Rhea" id="RHEA:28366"/>
        <dbReference type="ChEBI" id="CHEBI:15378"/>
        <dbReference type="ChEBI" id="CHEBI:58223"/>
        <dbReference type="ChEBI" id="CHEBI:61495"/>
        <dbReference type="ChEBI" id="CHEBI:62959"/>
        <dbReference type="ChEBI" id="CHEBI:70731"/>
        <dbReference type="EC" id="2.4.1.180"/>
    </reaction>
</comment>
<comment type="pathway">
    <text evidence="1">Bacterial outer membrane biogenesis; enterobacterial common antigen biosynthesis.</text>
</comment>
<comment type="similarity">
    <text evidence="1">Belongs to the glycosyltransferase 26 family.</text>
</comment>
<organism>
    <name type="scientific">Escherichia coli (strain SMS-3-5 / SECEC)</name>
    <dbReference type="NCBI Taxonomy" id="439855"/>
    <lineage>
        <taxon>Bacteria</taxon>
        <taxon>Pseudomonadati</taxon>
        <taxon>Pseudomonadota</taxon>
        <taxon>Gammaproteobacteria</taxon>
        <taxon>Enterobacterales</taxon>
        <taxon>Enterobacteriaceae</taxon>
        <taxon>Escherichia</taxon>
    </lineage>
</organism>
<evidence type="ECO:0000255" key="1">
    <source>
        <dbReference type="HAMAP-Rule" id="MF_01001"/>
    </source>
</evidence>
<gene>
    <name evidence="1" type="primary">wecG</name>
    <name evidence="1" type="synonym">rffM</name>
    <name type="ordered locus">EcSMS35_4159</name>
</gene>
<sequence>MNNNTTAPTYTLRGLQLIGWRDMQHALDYLFADGQLKQGTLVAINAEKMLTIEDNAEVRELINAAEFKYADGISVVRSVRKKYPQAQVSRVAGADLWEELMARAGKEGTPVFLVGGKPEVLAQTEAKLRNQWNVNIVGSQDGYFKPEQRQALFERIHASGAQIVTVAMGSPKQEIFMRDCRLVHPDALYMGVGGTYDVFTGHVKRAPKIWQTLGLEWLYRLLSQPSRIKRQLRLLRYLRWHYTGNL</sequence>
<reference key="1">
    <citation type="journal article" date="2008" name="J. Bacteriol.">
        <title>Insights into the environmental resistance gene pool from the genome sequence of the multidrug-resistant environmental isolate Escherichia coli SMS-3-5.</title>
        <authorList>
            <person name="Fricke W.F."/>
            <person name="Wright M.S."/>
            <person name="Lindell A.H."/>
            <person name="Harkins D.M."/>
            <person name="Baker-Austin C."/>
            <person name="Ravel J."/>
            <person name="Stepanauskas R."/>
        </authorList>
    </citation>
    <scope>NUCLEOTIDE SEQUENCE [LARGE SCALE GENOMIC DNA]</scope>
    <source>
        <strain>SMS-3-5 / SECEC</strain>
    </source>
</reference>
<accession>B1LLW8</accession>